<keyword id="KW-0067">ATP-binding</keyword>
<keyword id="KW-0131">Cell cycle</keyword>
<keyword id="KW-0137">Centromere</keyword>
<keyword id="KW-0158">Chromosome</keyword>
<keyword id="KW-0159">Chromosome partition</keyword>
<keyword id="KW-0963">Cytoplasm</keyword>
<keyword id="KW-0206">Cytoskeleton</keyword>
<keyword id="KW-0418">Kinase</keyword>
<keyword id="KW-0995">Kinetochore</keyword>
<keyword id="KW-0547">Nucleotide-binding</keyword>
<keyword id="KW-0539">Nucleus</keyword>
<keyword id="KW-1185">Reference proteome</keyword>
<keyword id="KW-0723">Serine/threonine-protein kinase</keyword>
<keyword id="KW-0808">Transferase</keyword>
<accession>Q755C4</accession>
<evidence type="ECO:0000250" key="1"/>
<evidence type="ECO:0000250" key="2">
    <source>
        <dbReference type="UniProtKB" id="D6W3G1"/>
    </source>
</evidence>
<evidence type="ECO:0000250" key="3">
    <source>
        <dbReference type="UniProtKB" id="P38991"/>
    </source>
</evidence>
<evidence type="ECO:0000255" key="4">
    <source>
        <dbReference type="PROSITE-ProRule" id="PRU00159"/>
    </source>
</evidence>
<evidence type="ECO:0000255" key="5">
    <source>
        <dbReference type="PROSITE-ProRule" id="PRU10027"/>
    </source>
</evidence>
<evidence type="ECO:0000256" key="6">
    <source>
        <dbReference type="SAM" id="MobiDB-lite"/>
    </source>
</evidence>
<gene>
    <name type="primary">IPL1</name>
    <name type="ordered locus">AFL101C</name>
</gene>
<comment type="function">
    <text evidence="3">Component of the chromosomal passenger complex (CPC), a complex that acts as a key regulator of chromosome segregation and cytokinesis. Has a role in error-correction of aberrent kinetochore-microtubule attachments to ensure that sister kinetochores become bioriented and connect to opposite poles by promoting spindle assembly checkpoint signaling.</text>
</comment>
<comment type="catalytic activity">
    <reaction evidence="2">
        <text>L-seryl-[protein] + ATP = O-phospho-L-seryl-[protein] + ADP + H(+)</text>
        <dbReference type="Rhea" id="RHEA:17989"/>
        <dbReference type="Rhea" id="RHEA-COMP:9863"/>
        <dbReference type="Rhea" id="RHEA-COMP:11604"/>
        <dbReference type="ChEBI" id="CHEBI:15378"/>
        <dbReference type="ChEBI" id="CHEBI:29999"/>
        <dbReference type="ChEBI" id="CHEBI:30616"/>
        <dbReference type="ChEBI" id="CHEBI:83421"/>
        <dbReference type="ChEBI" id="CHEBI:456216"/>
        <dbReference type="EC" id="2.7.11.1"/>
    </reaction>
</comment>
<comment type="catalytic activity">
    <reaction>
        <text>L-threonyl-[protein] + ATP = O-phospho-L-threonyl-[protein] + ADP + H(+)</text>
        <dbReference type="Rhea" id="RHEA:46608"/>
        <dbReference type="Rhea" id="RHEA-COMP:11060"/>
        <dbReference type="Rhea" id="RHEA-COMP:11605"/>
        <dbReference type="ChEBI" id="CHEBI:15378"/>
        <dbReference type="ChEBI" id="CHEBI:30013"/>
        <dbReference type="ChEBI" id="CHEBI:30616"/>
        <dbReference type="ChEBI" id="CHEBI:61977"/>
        <dbReference type="ChEBI" id="CHEBI:456216"/>
        <dbReference type="EC" id="2.7.11.1"/>
    </reaction>
</comment>
<comment type="subcellular location">
    <subcellularLocation>
        <location evidence="1">Nucleus</location>
    </subcellularLocation>
    <subcellularLocation>
        <location evidence="1">Cytoplasm</location>
        <location evidence="1">Cytoskeleton</location>
        <location evidence="1">Spindle</location>
    </subcellularLocation>
    <subcellularLocation>
        <location evidence="1">Chromosome</location>
        <location evidence="1">Centromere</location>
        <location evidence="1">Kinetochore</location>
    </subcellularLocation>
    <text evidence="1">Associates with the mitotic spindle and on elongated and disassembling spindles. Also associated with the kinetochore (By similarity).</text>
</comment>
<comment type="similarity">
    <text evidence="4">Belongs to the protein kinase superfamily. Ser/Thr protein kinase family. Aurora subfamily.</text>
</comment>
<protein>
    <recommendedName>
        <fullName>Aurora kinase</fullName>
        <ecNumber evidence="3">2.7.11.1</ecNumber>
    </recommendedName>
    <alternativeName>
        <fullName>Spindle assembly checkpoint kinase</fullName>
    </alternativeName>
</protein>
<dbReference type="EC" id="2.7.11.1" evidence="3"/>
<dbReference type="EMBL" id="AE016819">
    <property type="protein sequence ID" value="AAS53273.1"/>
    <property type="molecule type" value="Genomic_DNA"/>
</dbReference>
<dbReference type="RefSeq" id="NP_985449.1">
    <property type="nucleotide sequence ID" value="NM_210803.1"/>
</dbReference>
<dbReference type="SMR" id="Q755C4"/>
<dbReference type="FunCoup" id="Q755C4">
    <property type="interactions" value="1140"/>
</dbReference>
<dbReference type="STRING" id="284811.Q755C4"/>
<dbReference type="EnsemblFungi" id="AAS53273">
    <property type="protein sequence ID" value="AAS53273"/>
    <property type="gene ID" value="AGOS_AFL101C"/>
</dbReference>
<dbReference type="GeneID" id="4621676"/>
<dbReference type="KEGG" id="ago:AGOS_AFL101C"/>
<dbReference type="eggNOG" id="KOG0580">
    <property type="taxonomic scope" value="Eukaryota"/>
</dbReference>
<dbReference type="HOGENOM" id="CLU_000288_63_6_1"/>
<dbReference type="InParanoid" id="Q755C4"/>
<dbReference type="OMA" id="ESRFPEW"/>
<dbReference type="OrthoDB" id="377346at2759"/>
<dbReference type="Proteomes" id="UP000000591">
    <property type="component" value="Chromosome VI"/>
</dbReference>
<dbReference type="GO" id="GO:0032133">
    <property type="term" value="C:chromosome passenger complex"/>
    <property type="evidence" value="ECO:0000318"/>
    <property type="project" value="GO_Central"/>
</dbReference>
<dbReference type="GO" id="GO:0005737">
    <property type="term" value="C:cytoplasm"/>
    <property type="evidence" value="ECO:0007669"/>
    <property type="project" value="UniProtKB-KW"/>
</dbReference>
<dbReference type="GO" id="GO:0000776">
    <property type="term" value="C:kinetochore"/>
    <property type="evidence" value="ECO:0000318"/>
    <property type="project" value="GO_Central"/>
</dbReference>
<dbReference type="GO" id="GO:0005634">
    <property type="term" value="C:nucleus"/>
    <property type="evidence" value="ECO:0000318"/>
    <property type="project" value="GO_Central"/>
</dbReference>
<dbReference type="GO" id="GO:0005876">
    <property type="term" value="C:spindle microtubule"/>
    <property type="evidence" value="ECO:0000318"/>
    <property type="project" value="GO_Central"/>
</dbReference>
<dbReference type="GO" id="GO:0051233">
    <property type="term" value="C:spindle midzone"/>
    <property type="evidence" value="ECO:0000318"/>
    <property type="project" value="GO_Central"/>
</dbReference>
<dbReference type="GO" id="GO:0000922">
    <property type="term" value="C:spindle pole"/>
    <property type="evidence" value="ECO:0000318"/>
    <property type="project" value="GO_Central"/>
</dbReference>
<dbReference type="GO" id="GO:0005524">
    <property type="term" value="F:ATP binding"/>
    <property type="evidence" value="ECO:0007669"/>
    <property type="project" value="UniProtKB-KW"/>
</dbReference>
<dbReference type="GO" id="GO:0106310">
    <property type="term" value="F:protein serine kinase activity"/>
    <property type="evidence" value="ECO:0007669"/>
    <property type="project" value="RHEA"/>
</dbReference>
<dbReference type="GO" id="GO:0004674">
    <property type="term" value="F:protein serine/threonine kinase activity"/>
    <property type="evidence" value="ECO:0007669"/>
    <property type="project" value="UniProtKB-KW"/>
</dbReference>
<dbReference type="GO" id="GO:0007059">
    <property type="term" value="P:chromosome segregation"/>
    <property type="evidence" value="ECO:0007669"/>
    <property type="project" value="UniProtKB-KW"/>
</dbReference>
<dbReference type="GO" id="GO:0007052">
    <property type="term" value="P:mitotic spindle organization"/>
    <property type="evidence" value="ECO:0000318"/>
    <property type="project" value="GO_Central"/>
</dbReference>
<dbReference type="GO" id="GO:0032465">
    <property type="term" value="P:regulation of cytokinesis"/>
    <property type="evidence" value="ECO:0000318"/>
    <property type="project" value="GO_Central"/>
</dbReference>
<dbReference type="CDD" id="cd14007">
    <property type="entry name" value="STKc_Aurora"/>
    <property type="match status" value="1"/>
</dbReference>
<dbReference type="FunFam" id="3.30.200.20:FF:000042">
    <property type="entry name" value="Aurora kinase A"/>
    <property type="match status" value="1"/>
</dbReference>
<dbReference type="FunFam" id="1.10.510.10:FF:000235">
    <property type="entry name" value="Serine/threonine-protein kinase ark1"/>
    <property type="match status" value="1"/>
</dbReference>
<dbReference type="Gene3D" id="1.10.510.10">
    <property type="entry name" value="Transferase(Phosphotransferase) domain 1"/>
    <property type="match status" value="1"/>
</dbReference>
<dbReference type="InterPro" id="IPR030616">
    <property type="entry name" value="Aur-like"/>
</dbReference>
<dbReference type="InterPro" id="IPR011009">
    <property type="entry name" value="Kinase-like_dom_sf"/>
</dbReference>
<dbReference type="InterPro" id="IPR000719">
    <property type="entry name" value="Prot_kinase_dom"/>
</dbReference>
<dbReference type="InterPro" id="IPR017441">
    <property type="entry name" value="Protein_kinase_ATP_BS"/>
</dbReference>
<dbReference type="InterPro" id="IPR008271">
    <property type="entry name" value="Ser/Thr_kinase_AS"/>
</dbReference>
<dbReference type="PANTHER" id="PTHR24350">
    <property type="entry name" value="SERINE/THREONINE-PROTEIN KINASE IAL-RELATED"/>
    <property type="match status" value="1"/>
</dbReference>
<dbReference type="Pfam" id="PF00069">
    <property type="entry name" value="Pkinase"/>
    <property type="match status" value="1"/>
</dbReference>
<dbReference type="SMART" id="SM00220">
    <property type="entry name" value="S_TKc"/>
    <property type="match status" value="1"/>
</dbReference>
<dbReference type="SUPFAM" id="SSF56112">
    <property type="entry name" value="Protein kinase-like (PK-like)"/>
    <property type="match status" value="1"/>
</dbReference>
<dbReference type="PROSITE" id="PS00107">
    <property type="entry name" value="PROTEIN_KINASE_ATP"/>
    <property type="match status" value="1"/>
</dbReference>
<dbReference type="PROSITE" id="PS50011">
    <property type="entry name" value="PROTEIN_KINASE_DOM"/>
    <property type="match status" value="1"/>
</dbReference>
<dbReference type="PROSITE" id="PS00108">
    <property type="entry name" value="PROTEIN_KINASE_ST"/>
    <property type="match status" value="1"/>
</dbReference>
<name>AURK_EREGS</name>
<reference key="1">
    <citation type="journal article" date="2004" name="Science">
        <title>The Ashbya gossypii genome as a tool for mapping the ancient Saccharomyces cerevisiae genome.</title>
        <authorList>
            <person name="Dietrich F.S."/>
            <person name="Voegeli S."/>
            <person name="Brachat S."/>
            <person name="Lerch A."/>
            <person name="Gates K."/>
            <person name="Steiner S."/>
            <person name="Mohr C."/>
            <person name="Poehlmann R."/>
            <person name="Luedi P."/>
            <person name="Choi S."/>
            <person name="Wing R.A."/>
            <person name="Flavier A."/>
            <person name="Gaffney T.D."/>
            <person name="Philippsen P."/>
        </authorList>
    </citation>
    <scope>NUCLEOTIDE SEQUENCE [LARGE SCALE GENOMIC DNA]</scope>
    <source>
        <strain>ATCC 10895 / CBS 109.51 / FGSC 9923 / NRRL Y-1056</strain>
    </source>
</reference>
<reference key="2">
    <citation type="journal article" date="2013" name="G3 (Bethesda)">
        <title>Genomes of Ashbya fungi isolated from insects reveal four mating-type loci, numerous translocations, lack of transposons, and distinct gene duplications.</title>
        <authorList>
            <person name="Dietrich F.S."/>
            <person name="Voegeli S."/>
            <person name="Kuo S."/>
            <person name="Philippsen P."/>
        </authorList>
    </citation>
    <scope>GENOME REANNOTATION</scope>
    <source>
        <strain>ATCC 10895 / CBS 109.51 / FGSC 9923 / NRRL Y-1056</strain>
    </source>
</reference>
<sequence length="367" mass="42445">MDADAILKKDQRRSSLKQRNLLLSMRLNQTTATNGAPPQARVQPGKGYRNPGKVLSPIRNQEMSPGKRPTLEISELKNVSPINQAHKTGKARAGGVPLSKLQNLKLADFEIGKVLGKGKFGRVYCVRHIESGFVCALKAMEKKDIIQYNIEKQFRREVEIQSSLRHPNLTQLYGYFHDEKRVYLLMEYLVNGELYKHLKGRSHFNDVVASYYVYQMADALDYMHERNILHRDIKPENIIIGFNNTIKLTDFGWSVITPKGSKRKTLCGTVDYLSPELIRSREYNEKVDVWALGVLTYELLVGSPPFEEESKELTYKRILKRNLIFPDHVDTEARHLISRLLEYDPGDRIPLKEVKKHPWIEKNKPFW</sequence>
<feature type="chain" id="PRO_0000086024" description="Aurora kinase">
    <location>
        <begin position="1"/>
        <end position="367"/>
    </location>
</feature>
<feature type="domain" description="Protein kinase" evidence="4">
    <location>
        <begin position="109"/>
        <end position="360"/>
    </location>
</feature>
<feature type="region of interest" description="Disordered" evidence="6">
    <location>
        <begin position="30"/>
        <end position="49"/>
    </location>
</feature>
<feature type="active site" description="Proton acceptor" evidence="4 5">
    <location>
        <position position="232"/>
    </location>
</feature>
<feature type="binding site" evidence="4">
    <location>
        <begin position="115"/>
        <end position="123"/>
    </location>
    <ligand>
        <name>ATP</name>
        <dbReference type="ChEBI" id="CHEBI:30616"/>
    </ligand>
</feature>
<feature type="binding site" evidence="4">
    <location>
        <position position="138"/>
    </location>
    <ligand>
        <name>ATP</name>
        <dbReference type="ChEBI" id="CHEBI:30616"/>
    </ligand>
</feature>
<proteinExistence type="inferred from homology"/>
<organism>
    <name type="scientific">Eremothecium gossypii (strain ATCC 10895 / CBS 109.51 / FGSC 9923 / NRRL Y-1056)</name>
    <name type="common">Yeast</name>
    <name type="synonym">Ashbya gossypii</name>
    <dbReference type="NCBI Taxonomy" id="284811"/>
    <lineage>
        <taxon>Eukaryota</taxon>
        <taxon>Fungi</taxon>
        <taxon>Dikarya</taxon>
        <taxon>Ascomycota</taxon>
        <taxon>Saccharomycotina</taxon>
        <taxon>Saccharomycetes</taxon>
        <taxon>Saccharomycetales</taxon>
        <taxon>Saccharomycetaceae</taxon>
        <taxon>Eremothecium</taxon>
    </lineage>
</organism>